<sequence length="565" mass="65351">MSGRSKRESRGSTRGKRESESRGSSGRVKRERDREREPEAASSRGSPVRVKREFEPASAREAPASVVPFVRVKREREVDEDSEPEREVRAKNGRVDSEDRRSRHCPYLDTINRSVLDFDFEKLCSISPSHVNAYACLVCGKYFQGRGLKSHAYIHSVQFSHHVFLNLHTLKFYCLPDNYEIIDSSLEDITYVLKPTFTKQQIANLDKQAKLSRAYDGTTYLPGIVGLNNIKANDYANAVLQALSNVPPLRNYFLEEDNYKNIKRPPGDIMFLLVQRFGELMRKLWNPRNFKAHVSPHEMLQAVVLCSKKTFQITKQGDGVDFLSWFLNALHSALGGTKKKKKTIVTDVFQGSMRIFTKKLPHPDLPAEEKEQLLHNDEYQETMVESTFMYLTLDLPTAPLYKDEKEQLIIPQVPLFNILAKFNGITEKEYKTYKENFLKRFQLTKLPPYLIFCIKRFTKNNFFVEKNPTIVNFPITNVDLREYLSEEVQAVHENTTYDLIANIVHDGKPSEGSYRIHVLHHGTGKWYELQDLQVTDILPQMITLSEAYIQIWKRRDNDETNQQGA</sequence>
<keyword id="KW-0131">Cell cycle</keyword>
<keyword id="KW-0132">Cell division</keyword>
<keyword id="KW-0378">Hydrolase</keyword>
<keyword id="KW-1017">Isopeptide bond</keyword>
<keyword id="KW-0479">Metal-binding</keyword>
<keyword id="KW-0507">mRNA processing</keyword>
<keyword id="KW-0508">mRNA splicing</keyword>
<keyword id="KW-0539">Nucleus</keyword>
<keyword id="KW-0597">Phosphoprotein</keyword>
<keyword id="KW-1185">Reference proteome</keyword>
<keyword id="KW-0747">Spliceosome</keyword>
<keyword id="KW-0832">Ubl conjugation</keyword>
<keyword id="KW-0833">Ubl conjugation pathway</keyword>
<keyword id="KW-0862">Zinc</keyword>
<keyword id="KW-0863">Zinc-finger</keyword>
<feature type="chain" id="PRO_0000223964" description="Ubiquitin carboxyl-terminal hydrolase 39">
    <location>
        <begin position="1"/>
        <end position="565"/>
    </location>
</feature>
<feature type="domain" description="USP">
    <location>
        <begin position="225"/>
        <end position="555"/>
    </location>
</feature>
<feature type="zinc finger region" description="UBP-type; degenerate" evidence="3">
    <location>
        <begin position="103"/>
        <end position="200"/>
    </location>
</feature>
<feature type="region of interest" description="Disordered" evidence="4">
    <location>
        <begin position="1"/>
        <end position="61"/>
    </location>
</feature>
<feature type="region of interest" description="Disordered" evidence="4">
    <location>
        <begin position="75"/>
        <end position="96"/>
    </location>
</feature>
<feature type="compositionally biased region" description="Basic and acidic residues" evidence="4">
    <location>
        <begin position="1"/>
        <end position="21"/>
    </location>
</feature>
<feature type="compositionally biased region" description="Basic and acidic residues" evidence="4">
    <location>
        <begin position="28"/>
        <end position="39"/>
    </location>
</feature>
<feature type="compositionally biased region" description="Basic and acidic residues" evidence="4">
    <location>
        <begin position="85"/>
        <end position="96"/>
    </location>
</feature>
<feature type="binding site" evidence="3">
    <location>
        <position position="136"/>
    </location>
    <ligand>
        <name>Zn(2+)</name>
        <dbReference type="ChEBI" id="CHEBI:29105"/>
    </ligand>
</feature>
<feature type="binding site" evidence="3">
    <location>
        <position position="139"/>
    </location>
    <ligand>
        <name>Zn(2+)</name>
        <dbReference type="ChEBI" id="CHEBI:29105"/>
    </ligand>
</feature>
<feature type="binding site" evidence="3">
    <location>
        <position position="155"/>
    </location>
    <ligand>
        <name>Zn(2+)</name>
        <dbReference type="ChEBI" id="CHEBI:29105"/>
    </ligand>
</feature>
<feature type="binding site" evidence="3">
    <location>
        <position position="161"/>
    </location>
    <ligand>
        <name>Zn(2+)</name>
        <dbReference type="ChEBI" id="CHEBI:29105"/>
    </ligand>
</feature>
<feature type="modified residue" description="Phosphoserine" evidence="2">
    <location>
        <position position="46"/>
    </location>
</feature>
<feature type="modified residue" description="Phosphoserine" evidence="2">
    <location>
        <position position="82"/>
    </location>
</feature>
<feature type="cross-link" description="Glycyl lysine isopeptide (Lys-Gly) (interchain with G-Cter in SUMO2)" evidence="2">
    <location>
        <position position="51"/>
    </location>
</feature>
<gene>
    <name type="primary">USP39</name>
</gene>
<evidence type="ECO:0000250" key="1">
    <source>
        <dbReference type="UniProtKB" id="Q3TIX9"/>
    </source>
</evidence>
<evidence type="ECO:0000250" key="2">
    <source>
        <dbReference type="UniProtKB" id="Q53GS9"/>
    </source>
</evidence>
<evidence type="ECO:0000255" key="3">
    <source>
        <dbReference type="PROSITE-ProRule" id="PRU00502"/>
    </source>
</evidence>
<evidence type="ECO:0000256" key="4">
    <source>
        <dbReference type="SAM" id="MobiDB-lite"/>
    </source>
</evidence>
<evidence type="ECO:0000305" key="5"/>
<reference key="1">
    <citation type="submission" date="2004-11" db="EMBL/GenBank/DDBJ databases">
        <authorList>
            <consortium name="The German cDNA consortium"/>
        </authorList>
    </citation>
    <scope>NUCLEOTIDE SEQUENCE [LARGE SCALE MRNA]</scope>
    <source>
        <tissue>Heart</tissue>
    </source>
</reference>
<dbReference type="EC" id="3.4.19.12" evidence="2"/>
<dbReference type="EMBL" id="CR860257">
    <property type="protein sequence ID" value="CAH92399.1"/>
    <property type="molecule type" value="mRNA"/>
</dbReference>
<dbReference type="RefSeq" id="NP_001126415.1">
    <property type="nucleotide sequence ID" value="NM_001132943.1"/>
</dbReference>
<dbReference type="SMR" id="Q5R761"/>
<dbReference type="STRING" id="9601.ENSPPYP00000013631"/>
<dbReference type="GeneID" id="100173398"/>
<dbReference type="KEGG" id="pon:100173398"/>
<dbReference type="CTD" id="10713"/>
<dbReference type="eggNOG" id="KOG2026">
    <property type="taxonomic scope" value="Eukaryota"/>
</dbReference>
<dbReference type="InParanoid" id="Q5R761"/>
<dbReference type="OrthoDB" id="10263353at2759"/>
<dbReference type="Proteomes" id="UP000001595">
    <property type="component" value="Unplaced"/>
</dbReference>
<dbReference type="GO" id="GO:0005634">
    <property type="term" value="C:nucleus"/>
    <property type="evidence" value="ECO:0000250"/>
    <property type="project" value="UniProtKB"/>
</dbReference>
<dbReference type="GO" id="GO:0005681">
    <property type="term" value="C:spliceosomal complex"/>
    <property type="evidence" value="ECO:0007669"/>
    <property type="project" value="UniProtKB-KW"/>
</dbReference>
<dbReference type="GO" id="GO:0046540">
    <property type="term" value="C:U4/U6 x U5 tri-snRNP complex"/>
    <property type="evidence" value="ECO:0000250"/>
    <property type="project" value="UniProtKB"/>
</dbReference>
<dbReference type="GO" id="GO:0004843">
    <property type="term" value="F:cysteine-type deubiquitinase activity"/>
    <property type="evidence" value="ECO:0007669"/>
    <property type="project" value="InterPro"/>
</dbReference>
<dbReference type="GO" id="GO:0008270">
    <property type="term" value="F:zinc ion binding"/>
    <property type="evidence" value="ECO:0007669"/>
    <property type="project" value="UniProtKB-KW"/>
</dbReference>
<dbReference type="GO" id="GO:0051301">
    <property type="term" value="P:cell division"/>
    <property type="evidence" value="ECO:0007669"/>
    <property type="project" value="UniProtKB-KW"/>
</dbReference>
<dbReference type="GO" id="GO:0000398">
    <property type="term" value="P:mRNA splicing, via spliceosome"/>
    <property type="evidence" value="ECO:0000250"/>
    <property type="project" value="UniProtKB"/>
</dbReference>
<dbReference type="GO" id="GO:0016579">
    <property type="term" value="P:protein deubiquitination"/>
    <property type="evidence" value="ECO:0007669"/>
    <property type="project" value="InterPro"/>
</dbReference>
<dbReference type="GO" id="GO:0000245">
    <property type="term" value="P:spliceosomal complex assembly"/>
    <property type="evidence" value="ECO:0000250"/>
    <property type="project" value="UniProtKB"/>
</dbReference>
<dbReference type="CDD" id="cd02669">
    <property type="entry name" value="Peptidase_C19M"/>
    <property type="match status" value="1"/>
</dbReference>
<dbReference type="FunFam" id="3.30.40.10:FF:000068">
    <property type="entry name" value="U4/U6.U5 tri-snRNP-associated protein 2"/>
    <property type="match status" value="1"/>
</dbReference>
<dbReference type="FunFam" id="3.90.70.10:FF:000030">
    <property type="entry name" value="U4/U6.U5 tri-snRNP-associated protein 2"/>
    <property type="match status" value="1"/>
</dbReference>
<dbReference type="Gene3D" id="3.90.70.10">
    <property type="entry name" value="Cysteine proteinases"/>
    <property type="match status" value="1"/>
</dbReference>
<dbReference type="Gene3D" id="3.30.40.10">
    <property type="entry name" value="Zinc/RING finger domain, C3HC4 (zinc finger)"/>
    <property type="match status" value="1"/>
</dbReference>
<dbReference type="InterPro" id="IPR038765">
    <property type="entry name" value="Papain-like_cys_pep_sf"/>
</dbReference>
<dbReference type="InterPro" id="IPR001394">
    <property type="entry name" value="Peptidase_C19_UCH"/>
</dbReference>
<dbReference type="InterPro" id="IPR050185">
    <property type="entry name" value="Ub_carboxyl-term_hydrolase"/>
</dbReference>
<dbReference type="InterPro" id="IPR033809">
    <property type="entry name" value="USP39"/>
</dbReference>
<dbReference type="InterPro" id="IPR028889">
    <property type="entry name" value="USP_dom"/>
</dbReference>
<dbReference type="InterPro" id="IPR013083">
    <property type="entry name" value="Znf_RING/FYVE/PHD"/>
</dbReference>
<dbReference type="InterPro" id="IPR001607">
    <property type="entry name" value="Znf_UBP"/>
</dbReference>
<dbReference type="PANTHER" id="PTHR21646:SF16">
    <property type="entry name" value="U4_U6.U5 TRI-SNRNP-ASSOCIATED PROTEIN 2"/>
    <property type="match status" value="1"/>
</dbReference>
<dbReference type="PANTHER" id="PTHR21646">
    <property type="entry name" value="UBIQUITIN CARBOXYL-TERMINAL HYDROLASE"/>
    <property type="match status" value="1"/>
</dbReference>
<dbReference type="Pfam" id="PF00443">
    <property type="entry name" value="UCH"/>
    <property type="match status" value="1"/>
</dbReference>
<dbReference type="Pfam" id="PF02148">
    <property type="entry name" value="zf-UBP"/>
    <property type="match status" value="1"/>
</dbReference>
<dbReference type="SMART" id="SM00290">
    <property type="entry name" value="ZnF_UBP"/>
    <property type="match status" value="1"/>
</dbReference>
<dbReference type="SUPFAM" id="SSF54001">
    <property type="entry name" value="Cysteine proteinases"/>
    <property type="match status" value="1"/>
</dbReference>
<dbReference type="SUPFAM" id="SSF57850">
    <property type="entry name" value="RING/U-box"/>
    <property type="match status" value="1"/>
</dbReference>
<dbReference type="PROSITE" id="PS50235">
    <property type="entry name" value="USP_3"/>
    <property type="match status" value="1"/>
</dbReference>
<dbReference type="PROSITE" id="PS50271">
    <property type="entry name" value="ZF_UBP"/>
    <property type="match status" value="1"/>
</dbReference>
<accession>Q5R761</accession>
<organism>
    <name type="scientific">Pongo abelii</name>
    <name type="common">Sumatran orangutan</name>
    <name type="synonym">Pongo pygmaeus abelii</name>
    <dbReference type="NCBI Taxonomy" id="9601"/>
    <lineage>
        <taxon>Eukaryota</taxon>
        <taxon>Metazoa</taxon>
        <taxon>Chordata</taxon>
        <taxon>Craniata</taxon>
        <taxon>Vertebrata</taxon>
        <taxon>Euteleostomi</taxon>
        <taxon>Mammalia</taxon>
        <taxon>Eutheria</taxon>
        <taxon>Euarchontoglires</taxon>
        <taxon>Primates</taxon>
        <taxon>Haplorrhini</taxon>
        <taxon>Catarrhini</taxon>
        <taxon>Hominidae</taxon>
        <taxon>Pongo</taxon>
    </lineage>
</organism>
<protein>
    <recommendedName>
        <fullName>Ubiquitin carboxyl-terminal hydrolase 39</fullName>
        <ecNumber evidence="2">3.4.19.12</ecNumber>
    </recommendedName>
    <alternativeName>
        <fullName>U4/U6.U5 tri-snRNP-associated 65 kDa protein</fullName>
    </alternativeName>
</protein>
<comment type="function">
    <text evidence="1 2">Deubiquitinating enzyme that plays a role in many cellular processes including cellular antiviral response, epithelial morphogenesis, DNA repair or B-cell development. Plays a role in pre-mRNA splicing as a component of the U4/U6-U5 tri-snRNP, one of the building blocks of the precatalytic spliceosome (By similarity). Specifically regulates immunoglobulin gene rearrangement in a spliceosome-dependent manner, which involves modulating chromatin interactions at the Igh locus and therefore plays an essential role in B-cell development (By similarity). Regulates AURKB mRNA levels, and thereby plays a role in cytokinesis and in the spindle checkpoint. Regulates apoptosis and G2/M cell cycle checkpoint in response to DNA damage by deubiquitinating and stabilizing CHK2. Also plays an important role in DNA repair by controlling the recruitment of XRCC4/LIG4 to DNA double-strand breaks for non-homologous end-joining repair. Participates in antiviral activity by affecting the type I IFN signaling by stabilizing STAT1 and decreasing its 'Lys-6'-linked ubiquitination (By similarity). Contributes to non-canonical Wnt signaling during epidermal differentiation (By similarity). Acts as a negative regulator NF-kappa-B activation through deubiquitination of 'Lys-48'-linked ubiquitination of NFKBIA (By similarity).</text>
</comment>
<comment type="catalytic activity">
    <reaction evidence="2">
        <text>Thiol-dependent hydrolysis of ester, thioester, amide, peptide and isopeptide bonds formed by the C-terminal Gly of ubiquitin (a 76-residue protein attached to proteins as an intracellular targeting signal).</text>
        <dbReference type="EC" id="3.4.19.12"/>
    </reaction>
</comment>
<comment type="subunit">
    <text evidence="2">The U4/U6-U5 tri-snRNP complex is a building block of the precatalytic spliceosome (spliceosome B complex). Component of the U4/U6-U5 tri-snRNP complex composed of the U4, U6 and U5 snRNAs and at least PRPF3, PRPF4, PRPF6, PRPF8, PRPF31, SNRNP200, TXNL4A, SNRNP40, SNRPB, SNRPD1, SNRPD2, SNRPD3, SNRPE, SNRPF, SNRPG, DDX23, CD2BP2, PPIH, SNU13, EFTUD2, SART1 and USP39, plus LSM2, LSM3, LSM4, LSM5, LSM6, LSM7 and LSM8.</text>
</comment>
<comment type="subcellular location">
    <subcellularLocation>
        <location evidence="2">Nucleus</location>
    </subcellularLocation>
</comment>
<comment type="similarity">
    <text evidence="5">Belongs to the peptidase C19 family.</text>
</comment>
<comment type="caution">
    <text evidence="2 5">Lacks the conserved His and Cys residues that are essential for the activity of de-ubiquitinating enzymes. Lacks ubiquitin C-terminal hydrolase activity.</text>
</comment>
<name>UBP39_PONAB</name>
<proteinExistence type="evidence at transcript level"/>